<sequence length="249" mass="28202">MLQKVTGIVVRTVNYGESNKVVTLFTEELGKVAIMARGAKKPGSRFHASSQPFVEGVYIFPSSRGLAQLKSSDVMTSYPEIRKDVERMAYAMYWLELVDRSVEDRVQNRPLFRILQDALQALNAGMDADVITHYVELRILHLLGVAPVLTGCVRCGDVTDPMYFSVASGGFLCARHPEEGVILLSERLAKLLYLMSKHELSEFRNVPLSDESRVLLRQLFDAYMESYSGLRLKTKRVLDQMIRLHLNED</sequence>
<reference key="1">
    <citation type="journal article" date="2011" name="J. Bacteriol.">
        <title>Complete genome sequence of the Thermophilic Bacterium Exiguobacterium sp. AT1b.</title>
        <authorList>
            <person name="Vishnivetskaya T.A."/>
            <person name="Lucas S."/>
            <person name="Copeland A."/>
            <person name="Lapidus A."/>
            <person name="Glavina del Rio T."/>
            <person name="Dalin E."/>
            <person name="Tice H."/>
            <person name="Bruce D.C."/>
            <person name="Goodwin L.A."/>
            <person name="Pitluck S."/>
            <person name="Saunders E."/>
            <person name="Brettin T."/>
            <person name="Detter C."/>
            <person name="Han C."/>
            <person name="Larimer F."/>
            <person name="Land M.L."/>
            <person name="Hauser L.J."/>
            <person name="Kyrpides N.C."/>
            <person name="Ovchinnikova G."/>
            <person name="Kathariou S."/>
            <person name="Ramaley R.F."/>
            <person name="Rodrigues D.F."/>
            <person name="Hendrix C."/>
            <person name="Richardson P."/>
            <person name="Tiedje J.M."/>
        </authorList>
    </citation>
    <scope>NUCLEOTIDE SEQUENCE [LARGE SCALE GENOMIC DNA]</scope>
    <source>
        <strain>ATCC BAA-1283 / AT1b</strain>
    </source>
</reference>
<feature type="chain" id="PRO_1000204103" description="DNA repair protein RecO">
    <location>
        <begin position="1"/>
        <end position="249"/>
    </location>
</feature>
<protein>
    <recommendedName>
        <fullName evidence="1">DNA repair protein RecO</fullName>
    </recommendedName>
    <alternativeName>
        <fullName evidence="1">Recombination protein O</fullName>
    </alternativeName>
</protein>
<gene>
    <name evidence="1" type="primary">recO</name>
    <name type="ordered locus">EAT1b_0595</name>
</gene>
<name>RECO_EXISA</name>
<accession>C4L405</accession>
<organism>
    <name type="scientific">Exiguobacterium sp. (strain ATCC BAA-1283 / AT1b)</name>
    <dbReference type="NCBI Taxonomy" id="360911"/>
    <lineage>
        <taxon>Bacteria</taxon>
        <taxon>Bacillati</taxon>
        <taxon>Bacillota</taxon>
        <taxon>Bacilli</taxon>
        <taxon>Bacillales</taxon>
        <taxon>Bacillales Family XII. Incertae Sedis</taxon>
        <taxon>Exiguobacterium</taxon>
    </lineage>
</organism>
<keyword id="KW-0227">DNA damage</keyword>
<keyword id="KW-0233">DNA recombination</keyword>
<keyword id="KW-0234">DNA repair</keyword>
<proteinExistence type="inferred from homology"/>
<dbReference type="EMBL" id="CP001615">
    <property type="protein sequence ID" value="ACQ69527.1"/>
    <property type="molecule type" value="Genomic_DNA"/>
</dbReference>
<dbReference type="RefSeq" id="WP_012726646.1">
    <property type="nucleotide sequence ID" value="NC_012673.1"/>
</dbReference>
<dbReference type="SMR" id="C4L405"/>
<dbReference type="STRING" id="360911.EAT1b_0595"/>
<dbReference type="KEGG" id="eat:EAT1b_0595"/>
<dbReference type="eggNOG" id="COG1381">
    <property type="taxonomic scope" value="Bacteria"/>
</dbReference>
<dbReference type="HOGENOM" id="CLU_066632_4_0_9"/>
<dbReference type="OrthoDB" id="9797083at2"/>
<dbReference type="Proteomes" id="UP000000716">
    <property type="component" value="Chromosome"/>
</dbReference>
<dbReference type="GO" id="GO:0043590">
    <property type="term" value="C:bacterial nucleoid"/>
    <property type="evidence" value="ECO:0007669"/>
    <property type="project" value="TreeGrafter"/>
</dbReference>
<dbReference type="GO" id="GO:0006310">
    <property type="term" value="P:DNA recombination"/>
    <property type="evidence" value="ECO:0007669"/>
    <property type="project" value="UniProtKB-UniRule"/>
</dbReference>
<dbReference type="GO" id="GO:0006302">
    <property type="term" value="P:double-strand break repair"/>
    <property type="evidence" value="ECO:0007669"/>
    <property type="project" value="TreeGrafter"/>
</dbReference>
<dbReference type="Gene3D" id="2.40.50.140">
    <property type="entry name" value="Nucleic acid-binding proteins"/>
    <property type="match status" value="1"/>
</dbReference>
<dbReference type="Gene3D" id="1.20.1440.120">
    <property type="entry name" value="Recombination protein O, C-terminal domain"/>
    <property type="match status" value="1"/>
</dbReference>
<dbReference type="HAMAP" id="MF_00201">
    <property type="entry name" value="RecO"/>
    <property type="match status" value="1"/>
</dbReference>
<dbReference type="InterPro" id="IPR037278">
    <property type="entry name" value="ARFGAP/RecO"/>
</dbReference>
<dbReference type="InterPro" id="IPR022572">
    <property type="entry name" value="DNA_rep/recomb_RecO_N"/>
</dbReference>
<dbReference type="InterPro" id="IPR012340">
    <property type="entry name" value="NA-bd_OB-fold"/>
</dbReference>
<dbReference type="InterPro" id="IPR003717">
    <property type="entry name" value="RecO"/>
</dbReference>
<dbReference type="InterPro" id="IPR042242">
    <property type="entry name" value="RecO_C"/>
</dbReference>
<dbReference type="NCBIfam" id="TIGR00613">
    <property type="entry name" value="reco"/>
    <property type="match status" value="1"/>
</dbReference>
<dbReference type="PANTHER" id="PTHR33991">
    <property type="entry name" value="DNA REPAIR PROTEIN RECO"/>
    <property type="match status" value="1"/>
</dbReference>
<dbReference type="PANTHER" id="PTHR33991:SF1">
    <property type="entry name" value="DNA REPAIR PROTEIN RECO"/>
    <property type="match status" value="1"/>
</dbReference>
<dbReference type="Pfam" id="PF02565">
    <property type="entry name" value="RecO_C"/>
    <property type="match status" value="1"/>
</dbReference>
<dbReference type="Pfam" id="PF11967">
    <property type="entry name" value="RecO_N"/>
    <property type="match status" value="1"/>
</dbReference>
<dbReference type="SUPFAM" id="SSF57863">
    <property type="entry name" value="ArfGap/RecO-like zinc finger"/>
    <property type="match status" value="1"/>
</dbReference>
<dbReference type="SUPFAM" id="SSF50249">
    <property type="entry name" value="Nucleic acid-binding proteins"/>
    <property type="match status" value="1"/>
</dbReference>
<comment type="function">
    <text evidence="1">Involved in DNA repair and RecF pathway recombination.</text>
</comment>
<comment type="similarity">
    <text evidence="1">Belongs to the RecO family.</text>
</comment>
<evidence type="ECO:0000255" key="1">
    <source>
        <dbReference type="HAMAP-Rule" id="MF_00201"/>
    </source>
</evidence>